<feature type="chain" id="PRO_1000013824" description="Putative 4-hydroxy-4-methyl-2-oxoglutarate aldolase">
    <location>
        <begin position="1"/>
        <end position="159"/>
    </location>
</feature>
<feature type="binding site" evidence="1">
    <location>
        <begin position="75"/>
        <end position="78"/>
    </location>
    <ligand>
        <name>substrate</name>
    </ligand>
</feature>
<feature type="binding site" evidence="1">
    <location>
        <position position="97"/>
    </location>
    <ligand>
        <name>substrate</name>
    </ligand>
</feature>
<feature type="binding site" evidence="1">
    <location>
        <position position="98"/>
    </location>
    <ligand>
        <name>a divalent metal cation</name>
        <dbReference type="ChEBI" id="CHEBI:60240"/>
    </ligand>
</feature>
<gene>
    <name type="ordered locus">AZOSEA25360</name>
    <name type="ORF">ebA4476</name>
</gene>
<sequence>MEFQTADLCDANESRVKIVSPMFRSYGGRGAFCGRITTLKVFEDNSLVRTALEGPGQGKVLVVDGGGSMRCALVGDQLALLGVKNQWAGVIVYGCIRDSKAIGTMELGVFALGSHPLKSIKKGAGDVDIAVTFGGVTFTPGHFIYADEDGVVVSESSLL</sequence>
<organism>
    <name type="scientific">Aromatoleum aromaticum (strain DSM 19018 / LMG 30748 / EbN1)</name>
    <name type="common">Azoarcus sp. (strain EbN1)</name>
    <dbReference type="NCBI Taxonomy" id="76114"/>
    <lineage>
        <taxon>Bacteria</taxon>
        <taxon>Pseudomonadati</taxon>
        <taxon>Pseudomonadota</taxon>
        <taxon>Betaproteobacteria</taxon>
        <taxon>Rhodocyclales</taxon>
        <taxon>Rhodocyclaceae</taxon>
        <taxon>Aromatoleum</taxon>
    </lineage>
</organism>
<evidence type="ECO:0000250" key="1"/>
<evidence type="ECO:0000305" key="2"/>
<keyword id="KW-0456">Lyase</keyword>
<keyword id="KW-0479">Metal-binding</keyword>
<keyword id="KW-1185">Reference proteome</keyword>
<name>RRAAH_AROAE</name>
<comment type="function">
    <text evidence="1">Catalyzes the aldol cleavage of 4-hydroxy-4-methyl-2-oxoglutarate (HMG) into 2 molecules of pyruvate. Also contains a secondary oxaloacetate (OAA) decarboxylase activity due to the common pyruvate enolate transition state formed following C-C bond cleavage in the retro-aldol and decarboxylation reactions (By similarity).</text>
</comment>
<comment type="catalytic activity">
    <reaction>
        <text>4-hydroxy-4-methyl-2-oxoglutarate = 2 pyruvate</text>
        <dbReference type="Rhea" id="RHEA:22748"/>
        <dbReference type="ChEBI" id="CHEBI:15361"/>
        <dbReference type="ChEBI" id="CHEBI:58276"/>
        <dbReference type="EC" id="4.1.3.17"/>
    </reaction>
</comment>
<comment type="catalytic activity">
    <reaction>
        <text>oxaloacetate + H(+) = pyruvate + CO2</text>
        <dbReference type="Rhea" id="RHEA:15641"/>
        <dbReference type="ChEBI" id="CHEBI:15361"/>
        <dbReference type="ChEBI" id="CHEBI:15378"/>
        <dbReference type="ChEBI" id="CHEBI:16452"/>
        <dbReference type="ChEBI" id="CHEBI:16526"/>
        <dbReference type="EC" id="4.1.1.112"/>
    </reaction>
</comment>
<comment type="cofactor">
    <cofactor evidence="1">
        <name>a divalent metal cation</name>
        <dbReference type="ChEBI" id="CHEBI:60240"/>
    </cofactor>
    <text evidence="1">Divalent metal cation.</text>
</comment>
<comment type="subunit">
    <text evidence="1">Homotrimer.</text>
</comment>
<comment type="similarity">
    <text evidence="2">Belongs to the class II aldolase/RraA-like family.</text>
</comment>
<proteinExistence type="inferred from homology"/>
<protein>
    <recommendedName>
        <fullName>Putative 4-hydroxy-4-methyl-2-oxoglutarate aldolase</fullName>
        <shortName>HMG aldolase</shortName>
        <ecNumber>4.1.3.17</ecNumber>
    </recommendedName>
    <alternativeName>
        <fullName>Oxaloacetate decarboxylase</fullName>
        <shortName>OAA decarboxylase</shortName>
        <ecNumber>4.1.1.112</ecNumber>
    </alternativeName>
    <alternativeName>
        <fullName>Regulator of ribonuclease activity homolog</fullName>
    </alternativeName>
    <alternativeName>
        <fullName>RraA-like protein</fullName>
    </alternativeName>
</protein>
<reference key="1">
    <citation type="journal article" date="2005" name="Arch. Microbiol.">
        <title>The genome sequence of an anaerobic aromatic-degrading denitrifying bacterium, strain EbN1.</title>
        <authorList>
            <person name="Rabus R."/>
            <person name="Kube M."/>
            <person name="Heider J."/>
            <person name="Beck A."/>
            <person name="Heitmann K."/>
            <person name="Widdel F."/>
            <person name="Reinhardt R."/>
        </authorList>
    </citation>
    <scope>NUCLEOTIDE SEQUENCE [LARGE SCALE GENOMIC DNA]</scope>
    <source>
        <strain>DSM 19018 / LMG 30748 / EbN1</strain>
    </source>
</reference>
<dbReference type="EC" id="4.1.3.17"/>
<dbReference type="EC" id="4.1.1.112"/>
<dbReference type="EMBL" id="CR555306">
    <property type="protein sequence ID" value="CAI08661.1"/>
    <property type="molecule type" value="Genomic_DNA"/>
</dbReference>
<dbReference type="RefSeq" id="WP_011238345.1">
    <property type="nucleotide sequence ID" value="NC_006513.1"/>
</dbReference>
<dbReference type="SMR" id="Q5P203"/>
<dbReference type="STRING" id="76114.ebA4476"/>
<dbReference type="KEGG" id="eba:ebA4476"/>
<dbReference type="eggNOG" id="COG0684">
    <property type="taxonomic scope" value="Bacteria"/>
</dbReference>
<dbReference type="HOGENOM" id="CLU_072626_4_0_4"/>
<dbReference type="OrthoDB" id="943692at2"/>
<dbReference type="Proteomes" id="UP000006552">
    <property type="component" value="Chromosome"/>
</dbReference>
<dbReference type="GO" id="GO:0047443">
    <property type="term" value="F:4-hydroxy-4-methyl-2-oxoglutarate aldolase activity"/>
    <property type="evidence" value="ECO:0007669"/>
    <property type="project" value="UniProtKB-EC"/>
</dbReference>
<dbReference type="GO" id="GO:0046872">
    <property type="term" value="F:metal ion binding"/>
    <property type="evidence" value="ECO:0007669"/>
    <property type="project" value="UniProtKB-KW"/>
</dbReference>
<dbReference type="GO" id="GO:0008948">
    <property type="term" value="F:oxaloacetate decarboxylase activity"/>
    <property type="evidence" value="ECO:0007669"/>
    <property type="project" value="UniProtKB-EC"/>
</dbReference>
<dbReference type="GO" id="GO:0008428">
    <property type="term" value="F:ribonuclease inhibitor activity"/>
    <property type="evidence" value="ECO:0007669"/>
    <property type="project" value="InterPro"/>
</dbReference>
<dbReference type="GO" id="GO:0051252">
    <property type="term" value="P:regulation of RNA metabolic process"/>
    <property type="evidence" value="ECO:0007669"/>
    <property type="project" value="InterPro"/>
</dbReference>
<dbReference type="CDD" id="cd16841">
    <property type="entry name" value="RraA_family"/>
    <property type="match status" value="1"/>
</dbReference>
<dbReference type="Gene3D" id="3.50.30.40">
    <property type="entry name" value="Ribonuclease E inhibitor RraA/RraA-like"/>
    <property type="match status" value="1"/>
</dbReference>
<dbReference type="InterPro" id="IPR010203">
    <property type="entry name" value="RraA"/>
</dbReference>
<dbReference type="InterPro" id="IPR005493">
    <property type="entry name" value="RraA/RraA-like"/>
</dbReference>
<dbReference type="InterPro" id="IPR036704">
    <property type="entry name" value="RraA/RraA-like_sf"/>
</dbReference>
<dbReference type="NCBIfam" id="TIGR01935">
    <property type="entry name" value="NOT-MenG"/>
    <property type="match status" value="1"/>
</dbReference>
<dbReference type="NCBIfam" id="NF006875">
    <property type="entry name" value="PRK09372.1"/>
    <property type="match status" value="1"/>
</dbReference>
<dbReference type="PANTHER" id="PTHR33254">
    <property type="entry name" value="4-HYDROXY-4-METHYL-2-OXOGLUTARATE ALDOLASE 3-RELATED"/>
    <property type="match status" value="1"/>
</dbReference>
<dbReference type="PANTHER" id="PTHR33254:SF4">
    <property type="entry name" value="4-HYDROXY-4-METHYL-2-OXOGLUTARATE ALDOLASE 3-RELATED"/>
    <property type="match status" value="1"/>
</dbReference>
<dbReference type="Pfam" id="PF03737">
    <property type="entry name" value="RraA-like"/>
    <property type="match status" value="1"/>
</dbReference>
<dbReference type="SUPFAM" id="SSF89562">
    <property type="entry name" value="RraA-like"/>
    <property type="match status" value="1"/>
</dbReference>
<accession>Q5P203</accession>